<dbReference type="EMBL" id="LT708304">
    <property type="protein sequence ID" value="SIT99090.1"/>
    <property type="molecule type" value="Genomic_DNA"/>
</dbReference>
<dbReference type="RefSeq" id="NP_854158.1">
    <property type="nucleotide sequence ID" value="NC_002945.3"/>
</dbReference>
<dbReference type="RefSeq" id="WP_003402361.1">
    <property type="nucleotide sequence ID" value="NC_002945.4"/>
</dbReference>
<dbReference type="SMR" id="P64706"/>
<dbReference type="PATRIC" id="fig|233413.5.peg.537"/>
<dbReference type="Proteomes" id="UP000001419">
    <property type="component" value="Chromosome"/>
</dbReference>
<dbReference type="GO" id="GO:0003677">
    <property type="term" value="F:DNA binding"/>
    <property type="evidence" value="ECO:0007669"/>
    <property type="project" value="UniProtKB-KW"/>
</dbReference>
<dbReference type="FunFam" id="3.30.420.40:FF:000330">
    <property type="entry name" value="Transcriptional regulator MT0503"/>
    <property type="match status" value="1"/>
</dbReference>
<dbReference type="Gene3D" id="3.30.420.40">
    <property type="match status" value="2"/>
</dbReference>
<dbReference type="Gene3D" id="1.10.10.10">
    <property type="entry name" value="Winged helix-like DNA-binding domain superfamily/Winged helix DNA-binding domain"/>
    <property type="match status" value="1"/>
</dbReference>
<dbReference type="InterPro" id="IPR043129">
    <property type="entry name" value="ATPase_NBD"/>
</dbReference>
<dbReference type="InterPro" id="IPR000600">
    <property type="entry name" value="ROK"/>
</dbReference>
<dbReference type="InterPro" id="IPR036388">
    <property type="entry name" value="WH-like_DNA-bd_sf"/>
</dbReference>
<dbReference type="InterPro" id="IPR036390">
    <property type="entry name" value="WH_DNA-bd_sf"/>
</dbReference>
<dbReference type="PANTHER" id="PTHR18964:SF149">
    <property type="entry name" value="BIFUNCTIONAL UDP-N-ACETYLGLUCOSAMINE 2-EPIMERASE_N-ACETYLMANNOSAMINE KINASE"/>
    <property type="match status" value="1"/>
</dbReference>
<dbReference type="PANTHER" id="PTHR18964">
    <property type="entry name" value="ROK (REPRESSOR, ORF, KINASE) FAMILY"/>
    <property type="match status" value="1"/>
</dbReference>
<dbReference type="Pfam" id="PF00480">
    <property type="entry name" value="ROK"/>
    <property type="match status" value="1"/>
</dbReference>
<dbReference type="SUPFAM" id="SSF53067">
    <property type="entry name" value="Actin-like ATPase domain"/>
    <property type="match status" value="1"/>
</dbReference>
<dbReference type="SUPFAM" id="SSF46785">
    <property type="entry name" value="Winged helix' DNA-binding domain"/>
    <property type="match status" value="1"/>
</dbReference>
<gene>
    <name type="ordered locus">BQ2027_MB0495</name>
</gene>
<comment type="function">
    <text evidence="1">Positively regulates the expression of PE13 and PPE18.</text>
</comment>
<comment type="similarity">
    <text evidence="3">Belongs to the ROK (NagC/XylR) family.</text>
</comment>
<protein>
    <recommendedName>
        <fullName evidence="1">Transcriptional regulator Mb0495</fullName>
    </recommendedName>
</protein>
<accession>P64706</accession>
<accession>A0A1R3XVH3</accession>
<accession>Q11151</accession>
<accession>X2BF70</accession>
<name>Y495_MYCBO</name>
<reference key="1">
    <citation type="journal article" date="2003" name="Proc. Natl. Acad. Sci. U.S.A.">
        <title>The complete genome sequence of Mycobacterium bovis.</title>
        <authorList>
            <person name="Garnier T."/>
            <person name="Eiglmeier K."/>
            <person name="Camus J.-C."/>
            <person name="Medina N."/>
            <person name="Mansoor H."/>
            <person name="Pryor M."/>
            <person name="Duthoy S."/>
            <person name="Grondin S."/>
            <person name="Lacroix C."/>
            <person name="Monsempe C."/>
            <person name="Simon S."/>
            <person name="Harris B."/>
            <person name="Atkin R."/>
            <person name="Doggett J."/>
            <person name="Mayes R."/>
            <person name="Keating L."/>
            <person name="Wheeler P.R."/>
            <person name="Parkhill J."/>
            <person name="Barrell B.G."/>
            <person name="Cole S.T."/>
            <person name="Gordon S.V."/>
            <person name="Hewinson R.G."/>
        </authorList>
    </citation>
    <scope>NUCLEOTIDE SEQUENCE [LARGE SCALE GENOMIC DNA]</scope>
    <source>
        <strain>ATCC BAA-935 / AF2122/97</strain>
    </source>
</reference>
<reference key="2">
    <citation type="journal article" date="2017" name="Genome Announc.">
        <title>Updated reference genome sequence and annotation of Mycobacterium bovis AF2122/97.</title>
        <authorList>
            <person name="Malone K.M."/>
            <person name="Farrell D."/>
            <person name="Stuber T.P."/>
            <person name="Schubert O.T."/>
            <person name="Aebersold R."/>
            <person name="Robbe-Austerman S."/>
            <person name="Gordon S.V."/>
        </authorList>
    </citation>
    <scope>NUCLEOTIDE SEQUENCE [LARGE SCALE GENOMIC DNA]</scope>
    <scope>GENOME REANNOTATION</scope>
    <source>
        <strain>ATCC BAA-935 / AF2122/97</strain>
    </source>
</reference>
<organism>
    <name type="scientific">Mycobacterium bovis (strain ATCC BAA-935 / AF2122/97)</name>
    <dbReference type="NCBI Taxonomy" id="233413"/>
    <lineage>
        <taxon>Bacteria</taxon>
        <taxon>Bacillati</taxon>
        <taxon>Actinomycetota</taxon>
        <taxon>Actinomycetes</taxon>
        <taxon>Mycobacteriales</taxon>
        <taxon>Mycobacteriaceae</taxon>
        <taxon>Mycobacterium</taxon>
        <taxon>Mycobacterium tuberculosis complex</taxon>
    </lineage>
</organism>
<proteinExistence type="inferred from homology"/>
<sequence>MYSTNRTSQSLSRKPGRKHQLRSHRYVMPPSLHLSDSAAASVFRAVRLRGPVGRDVIAGSTSLSIATVNRQVIALLEAGLLRERADLAVSGAIGRPRVPVEVNHEPFVTLGIHIGARTTSIVATDLFGRTLDTVETPTPRNAAGAALTSLADSADRYLQRWRRRRALWVGVTLGGAVDSATGHVDHPRLGWRQAPVGPVLADALGLPVSVASHVDAMAGAELMLGMRRFAPSSSTSLYVYARETVGYALMIGGRVHCPASGPGTIAPLPVHSEMLGGTGQLESTVSDEAVLAAARRLRIIPGIASRTRTGGSATAITDLLRVARAGNQQAKELLAERARVLGGAVALLRDLLNPDEVVVGGQAFTEYPEAMEQVEAAFTAGSVLAPRDIRVTVFGNRVQEAGAGIVSLSGLYADPLGALRRSGALDARLQDTAPEALA</sequence>
<evidence type="ECO:0000250" key="1">
    <source>
        <dbReference type="UniProtKB" id="P9WKV1"/>
    </source>
</evidence>
<evidence type="ECO:0000256" key="2">
    <source>
        <dbReference type="SAM" id="MobiDB-lite"/>
    </source>
</evidence>
<evidence type="ECO:0000305" key="3"/>
<feature type="chain" id="PRO_0000103688" description="Transcriptional regulator Mb0495">
    <location>
        <begin position="1"/>
        <end position="438"/>
    </location>
</feature>
<feature type="DNA-binding region" description="H-T-H motif" evidence="1">
    <location>
        <begin position="52"/>
        <end position="73"/>
    </location>
</feature>
<feature type="region of interest" description="Disordered" evidence="2">
    <location>
        <begin position="1"/>
        <end position="22"/>
    </location>
</feature>
<feature type="compositionally biased region" description="Polar residues" evidence="2">
    <location>
        <begin position="1"/>
        <end position="12"/>
    </location>
</feature>
<keyword id="KW-0010">Activator</keyword>
<keyword id="KW-0238">DNA-binding</keyword>
<keyword id="KW-1185">Reference proteome</keyword>
<keyword id="KW-0804">Transcription</keyword>
<keyword id="KW-0805">Transcription regulation</keyword>